<keyword id="KW-0010">Activator</keyword>
<keyword id="KW-0175">Coiled coil</keyword>
<keyword id="KW-0238">DNA-binding</keyword>
<keyword id="KW-0539">Nucleus</keyword>
<keyword id="KW-1185">Reference proteome</keyword>
<keyword id="KW-0804">Transcription</keyword>
<keyword id="KW-0805">Transcription regulation</keyword>
<accession>Q9ZQH2</accession>
<evidence type="ECO:0000250" key="1">
    <source>
        <dbReference type="UniProtKB" id="P13434"/>
    </source>
</evidence>
<evidence type="ECO:0000250" key="2">
    <source>
        <dbReference type="UniProtKB" id="P23511"/>
    </source>
</evidence>
<evidence type="ECO:0000250" key="3">
    <source>
        <dbReference type="UniProtKB" id="Q84W66"/>
    </source>
</evidence>
<evidence type="ECO:0000255" key="4"/>
<evidence type="ECO:0000255" key="5">
    <source>
        <dbReference type="PROSITE-ProRule" id="PRU00768"/>
    </source>
</evidence>
<evidence type="ECO:0000256" key="6">
    <source>
        <dbReference type="SAM" id="MobiDB-lite"/>
    </source>
</evidence>
<evidence type="ECO:0000269" key="7">
    <source>
    </source>
</evidence>
<evidence type="ECO:0000303" key="8">
    <source>
    </source>
</evidence>
<evidence type="ECO:0000305" key="9"/>
<evidence type="ECO:0000312" key="10">
    <source>
        <dbReference type="Araport" id="AT2G27470"/>
    </source>
</evidence>
<evidence type="ECO:0000312" key="11">
    <source>
        <dbReference type="EMBL" id="AAD15599.1"/>
    </source>
</evidence>
<gene>
    <name evidence="8" type="primary">NF-YB11</name>
    <name evidence="8" type="synonym">DPB4</name>
    <name evidence="10" type="ordered locus">At2g27470</name>
    <name evidence="11" type="ORF">F10A12.15</name>
</gene>
<proteinExistence type="evidence at protein level"/>
<organism>
    <name type="scientific">Arabidopsis thaliana</name>
    <name type="common">Mouse-ear cress</name>
    <dbReference type="NCBI Taxonomy" id="3702"/>
    <lineage>
        <taxon>Eukaryota</taxon>
        <taxon>Viridiplantae</taxon>
        <taxon>Streptophyta</taxon>
        <taxon>Embryophyta</taxon>
        <taxon>Tracheophyta</taxon>
        <taxon>Spermatophyta</taxon>
        <taxon>Magnoliopsida</taxon>
        <taxon>eudicotyledons</taxon>
        <taxon>Gunneridae</taxon>
        <taxon>Pentapetalae</taxon>
        <taxon>rosids</taxon>
        <taxon>malvids</taxon>
        <taxon>Brassicales</taxon>
        <taxon>Brassicaceae</taxon>
        <taxon>Camelineae</taxon>
        <taxon>Arabidopsis</taxon>
    </lineage>
</organism>
<protein>
    <recommendedName>
        <fullName evidence="8">DNA polymerase II subunit B4</fullName>
    </recommendedName>
    <alternativeName>
        <fullName evidence="8">Nuclear transcription factor Y subunit B-11</fullName>
        <shortName evidence="8">AtNF-YB11</shortName>
    </alternativeName>
</protein>
<comment type="function">
    <text evidence="3">Component of the NF-Y/HAP transcription factor complex (By similarity). The NF-Y complex stimulates the transcription of various genes by recognizing and binding to a CCAAT motif in promoters (By similarity).</text>
</comment>
<comment type="subunit">
    <text evidence="2 7">Heterotrimeric transcription factor composed of three components, NF-YA, NF-YB and NF-YC (By similarity). NF-YB and NF-YC must interact and dimerize for NF-YA association and DNA binding (By similarity). Binds directly with DPB3-1 (PubMed:25490919).</text>
</comment>
<comment type="interaction">
    <interactant intactId="EBI-15202674">
        <id>Q9ZQH2</id>
    </interactant>
    <interactant intactId="EBI-4461992">
        <id>Q9LN09</id>
        <label>DPB3-1</label>
    </interactant>
    <organismsDiffer>false</organismsDiffer>
    <experiments>3</experiments>
</comment>
<comment type="interaction">
    <interactant intactId="EBI-15202674">
        <id>Q9ZQH2</id>
    </interactant>
    <interactant intactId="EBI-15202676">
        <id>Q9FHS0</id>
        <label>NF-YC13</label>
    </interactant>
    <organismsDiffer>false</organismsDiffer>
    <experiments>3</experiments>
</comment>
<comment type="subcellular location">
    <subcellularLocation>
        <location evidence="5">Nucleus</location>
    </subcellularLocation>
</comment>
<comment type="induction">
    <text evidence="7">Repressed by heat and dehydration stress.</text>
</comment>
<comment type="similarity">
    <text evidence="9">Belongs to the NFYB/HAP3 subunit family.</text>
</comment>
<reference key="1">
    <citation type="journal article" date="1999" name="Nature">
        <title>Sequence and analysis of chromosome 2 of the plant Arabidopsis thaliana.</title>
        <authorList>
            <person name="Lin X."/>
            <person name="Kaul S."/>
            <person name="Rounsley S.D."/>
            <person name="Shea T.P."/>
            <person name="Benito M.-I."/>
            <person name="Town C.D."/>
            <person name="Fujii C.Y."/>
            <person name="Mason T.M."/>
            <person name="Bowman C.L."/>
            <person name="Barnstead M.E."/>
            <person name="Feldblyum T.V."/>
            <person name="Buell C.R."/>
            <person name="Ketchum K.A."/>
            <person name="Lee J.J."/>
            <person name="Ronning C.M."/>
            <person name="Koo H.L."/>
            <person name="Moffat K.S."/>
            <person name="Cronin L.A."/>
            <person name="Shen M."/>
            <person name="Pai G."/>
            <person name="Van Aken S."/>
            <person name="Umayam L."/>
            <person name="Tallon L.J."/>
            <person name="Gill J.E."/>
            <person name="Adams M.D."/>
            <person name="Carrera A.J."/>
            <person name="Creasy T.H."/>
            <person name="Goodman H.M."/>
            <person name="Somerville C.R."/>
            <person name="Copenhaver G.P."/>
            <person name="Preuss D."/>
            <person name="Nierman W.C."/>
            <person name="White O."/>
            <person name="Eisen J.A."/>
            <person name="Salzberg S.L."/>
            <person name="Fraser C.M."/>
            <person name="Venter J.C."/>
        </authorList>
    </citation>
    <scope>NUCLEOTIDE SEQUENCE [LARGE SCALE GENOMIC DNA]</scope>
    <source>
        <strain>cv. Columbia</strain>
    </source>
</reference>
<reference key="2">
    <citation type="journal article" date="2017" name="Plant J.">
        <title>Araport11: a complete reannotation of the Arabidopsis thaliana reference genome.</title>
        <authorList>
            <person name="Cheng C.Y."/>
            <person name="Krishnakumar V."/>
            <person name="Chan A.P."/>
            <person name="Thibaud-Nissen F."/>
            <person name="Schobel S."/>
            <person name="Town C.D."/>
        </authorList>
    </citation>
    <scope>GENOME REANNOTATION</scope>
    <source>
        <strain>cv. Columbia</strain>
    </source>
</reference>
<reference key="3">
    <citation type="journal article" date="2003" name="Science">
        <title>Empirical analysis of transcriptional activity in the Arabidopsis genome.</title>
        <authorList>
            <person name="Yamada K."/>
            <person name="Lim J."/>
            <person name="Dale J.M."/>
            <person name="Chen H."/>
            <person name="Shinn P."/>
            <person name="Palm C.J."/>
            <person name="Southwick A.M."/>
            <person name="Wu H.C."/>
            <person name="Kim C.J."/>
            <person name="Nguyen M."/>
            <person name="Pham P.K."/>
            <person name="Cheuk R.F."/>
            <person name="Karlin-Newmann G."/>
            <person name="Liu S.X."/>
            <person name="Lam B."/>
            <person name="Sakano H."/>
            <person name="Wu T."/>
            <person name="Yu G."/>
            <person name="Miranda M."/>
            <person name="Quach H.L."/>
            <person name="Tripp M."/>
            <person name="Chang C.H."/>
            <person name="Lee J.M."/>
            <person name="Toriumi M.J."/>
            <person name="Chan M.M."/>
            <person name="Tang C.C."/>
            <person name="Onodera C.S."/>
            <person name="Deng J.M."/>
            <person name="Akiyama K."/>
            <person name="Ansari Y."/>
            <person name="Arakawa T."/>
            <person name="Banh J."/>
            <person name="Banno F."/>
            <person name="Bowser L."/>
            <person name="Brooks S.Y."/>
            <person name="Carninci P."/>
            <person name="Chao Q."/>
            <person name="Choy N."/>
            <person name="Enju A."/>
            <person name="Goldsmith A.D."/>
            <person name="Gurjal M."/>
            <person name="Hansen N.F."/>
            <person name="Hayashizaki Y."/>
            <person name="Johnson-Hopson C."/>
            <person name="Hsuan V.W."/>
            <person name="Iida K."/>
            <person name="Karnes M."/>
            <person name="Khan S."/>
            <person name="Koesema E."/>
            <person name="Ishida J."/>
            <person name="Jiang P.X."/>
            <person name="Jones T."/>
            <person name="Kawai J."/>
            <person name="Kamiya A."/>
            <person name="Meyers C."/>
            <person name="Nakajima M."/>
            <person name="Narusaka M."/>
            <person name="Seki M."/>
            <person name="Sakurai T."/>
            <person name="Satou M."/>
            <person name="Tamse R."/>
            <person name="Vaysberg M."/>
            <person name="Wallender E.K."/>
            <person name="Wong C."/>
            <person name="Yamamura Y."/>
            <person name="Yuan S."/>
            <person name="Shinozaki K."/>
            <person name="Davis R.W."/>
            <person name="Theologis A."/>
            <person name="Ecker J.R."/>
        </authorList>
    </citation>
    <scope>NUCLEOTIDE SEQUENCE [LARGE SCALE MRNA]</scope>
    <source>
        <strain>cv. Columbia</strain>
    </source>
</reference>
<reference key="4">
    <citation type="journal article" date="2014" name="Plant Cell">
        <title>Arabidopsis DPB3-1, a DREB2A interactor, specifically enhances heat stress-induced gene expression by forming a heat stress-specific transcriptional complex with NF-Y subunits.</title>
        <authorList>
            <person name="Sato H."/>
            <person name="Mizoi J."/>
            <person name="Tanaka H."/>
            <person name="Maruyama K."/>
            <person name="Qin F."/>
            <person name="Osakabe Y."/>
            <person name="Morimoto K."/>
            <person name="Ohori T."/>
            <person name="Kusakabe K."/>
            <person name="Nagata M."/>
            <person name="Shinozaki K."/>
            <person name="Yamaguchi-Shinozaki K."/>
        </authorList>
    </citation>
    <scope>INTERACTION WITH DPB3-1</scope>
    <scope>REPRESSION BY HEAT STRESS AND DEHYDRATION</scope>
    <source>
        <strain>cv. Columbia</strain>
    </source>
</reference>
<reference key="5">
    <citation type="journal article" date="2016" name="Front. Plant Sci.">
        <title>The Arabidopsis thaliana Nuclear Factor Y Transcription Factors.</title>
        <authorList>
            <person name="Zhao H."/>
            <person name="Wu D."/>
            <person name="Kong F."/>
            <person name="Lin K."/>
            <person name="Zhang H."/>
            <person name="Li G."/>
        </authorList>
    </citation>
    <scope>REVIEW</scope>
</reference>
<name>DPB4_ARATH</name>
<feature type="chain" id="PRO_0000455273" description="DNA polymerase II subunit B4">
    <location>
        <begin position="1"/>
        <end position="275"/>
    </location>
</feature>
<feature type="DNA-binding region" evidence="1">
    <location>
        <begin position="11"/>
        <end position="17"/>
    </location>
</feature>
<feature type="region of interest" description="Disordered" evidence="6">
    <location>
        <begin position="112"/>
        <end position="275"/>
    </location>
</feature>
<feature type="coiled-coil region" evidence="4">
    <location>
        <begin position="152"/>
        <end position="179"/>
    </location>
</feature>
<feature type="short sequence motif" description="Nuclear localization signal" evidence="5">
    <location>
        <begin position="135"/>
        <end position="142"/>
    </location>
</feature>
<feature type="compositionally biased region" description="Low complexity" evidence="6">
    <location>
        <begin position="112"/>
        <end position="122"/>
    </location>
</feature>
<feature type="compositionally biased region" description="Basic and acidic residues" evidence="6">
    <location>
        <begin position="151"/>
        <end position="161"/>
    </location>
</feature>
<feature type="compositionally biased region" description="Acidic residues" evidence="6">
    <location>
        <begin position="162"/>
        <end position="237"/>
    </location>
</feature>
<feature type="compositionally biased region" description="Acidic residues" evidence="6">
    <location>
        <begin position="266"/>
        <end position="275"/>
    </location>
</feature>
<sequence>MESEKVVVDELPLAIVRRVVKKKLSECSPDYDVSIHKEALLAFSESARIFIHYLSATANDFCKDARRQTMKADDVFKALEEMDFSEFLEPLKSSLEDFKKKNAGKKAGAAAASYPAGGAALKSSSGTASKPKETKKRKQEEPSTQKGARKSKIDEETKRNDEETENDNTEEENGNDEEDENGNDEEDENDDENTEENGNDEENDDENTEENGNDEENEKEDEENSMEENGNESEESGNEDHSMEENGSGVGEDNENEDGSVSGSGEEVESDEEDE</sequence>
<dbReference type="EMBL" id="AC006232">
    <property type="protein sequence ID" value="AAD15599.1"/>
    <property type="molecule type" value="Genomic_DNA"/>
</dbReference>
<dbReference type="EMBL" id="CP002685">
    <property type="protein sequence ID" value="AEC08000.1"/>
    <property type="molecule type" value="Genomic_DNA"/>
</dbReference>
<dbReference type="EMBL" id="BT004083">
    <property type="protein sequence ID" value="AAO42110.1"/>
    <property type="molecule type" value="mRNA"/>
</dbReference>
<dbReference type="PIR" id="C84673">
    <property type="entry name" value="C84673"/>
</dbReference>
<dbReference type="RefSeq" id="NP_180316.1">
    <property type="nucleotide sequence ID" value="NM_128307.6"/>
</dbReference>
<dbReference type="SMR" id="Q9ZQH2"/>
<dbReference type="FunCoup" id="Q9ZQH2">
    <property type="interactions" value="4"/>
</dbReference>
<dbReference type="IntAct" id="Q9ZQH2">
    <property type="interactions" value="3"/>
</dbReference>
<dbReference type="STRING" id="3702.Q9ZQH2"/>
<dbReference type="PaxDb" id="3702-AT2G27470.1"/>
<dbReference type="ProteomicsDB" id="192018"/>
<dbReference type="EnsemblPlants" id="AT2G27470.1">
    <property type="protein sequence ID" value="AT2G27470.1"/>
    <property type="gene ID" value="AT2G27470"/>
</dbReference>
<dbReference type="GeneID" id="817292"/>
<dbReference type="Gramene" id="AT2G27470.1">
    <property type="protein sequence ID" value="AT2G27470.1"/>
    <property type="gene ID" value="AT2G27470"/>
</dbReference>
<dbReference type="KEGG" id="ath:AT2G27470"/>
<dbReference type="Araport" id="AT2G27470"/>
<dbReference type="TAIR" id="AT2G27470">
    <property type="gene designation" value="NF-YB11"/>
</dbReference>
<dbReference type="eggNOG" id="KOG0870">
    <property type="taxonomic scope" value="Eukaryota"/>
</dbReference>
<dbReference type="HOGENOM" id="CLU_066247_7_0_1"/>
<dbReference type="InParanoid" id="Q9ZQH2"/>
<dbReference type="OMA" id="NTYRRKV"/>
<dbReference type="PhylomeDB" id="Q9ZQH2"/>
<dbReference type="CD-CODE" id="4299E36E">
    <property type="entry name" value="Nucleolus"/>
</dbReference>
<dbReference type="PRO" id="PR:Q9ZQH2"/>
<dbReference type="Proteomes" id="UP000006548">
    <property type="component" value="Chromosome 2"/>
</dbReference>
<dbReference type="ExpressionAtlas" id="Q9ZQH2">
    <property type="expression patterns" value="baseline and differential"/>
</dbReference>
<dbReference type="GO" id="GO:0005634">
    <property type="term" value="C:nucleus"/>
    <property type="evidence" value="ECO:0007669"/>
    <property type="project" value="UniProtKB-SubCell"/>
</dbReference>
<dbReference type="GO" id="GO:0003677">
    <property type="term" value="F:DNA binding"/>
    <property type="evidence" value="ECO:0007669"/>
    <property type="project" value="UniProtKB-KW"/>
</dbReference>
<dbReference type="GO" id="GO:0003700">
    <property type="term" value="F:DNA-binding transcription factor activity"/>
    <property type="evidence" value="ECO:0000250"/>
    <property type="project" value="TAIR"/>
</dbReference>
<dbReference type="GO" id="GO:0046982">
    <property type="term" value="F:protein heterodimerization activity"/>
    <property type="evidence" value="ECO:0007669"/>
    <property type="project" value="InterPro"/>
</dbReference>
<dbReference type="GO" id="GO:0006355">
    <property type="term" value="P:regulation of DNA-templated transcription"/>
    <property type="evidence" value="ECO:0000304"/>
    <property type="project" value="TAIR"/>
</dbReference>
<dbReference type="GO" id="GO:0009408">
    <property type="term" value="P:response to heat"/>
    <property type="evidence" value="ECO:0000270"/>
    <property type="project" value="UniProtKB"/>
</dbReference>
<dbReference type="GO" id="GO:0009414">
    <property type="term" value="P:response to water deprivation"/>
    <property type="evidence" value="ECO:0000270"/>
    <property type="project" value="UniProtKB"/>
</dbReference>
<dbReference type="CDD" id="cd22928">
    <property type="entry name" value="HFD_POLE3_DPB4"/>
    <property type="match status" value="1"/>
</dbReference>
<dbReference type="Gene3D" id="1.10.20.10">
    <property type="entry name" value="Histone, subunit A"/>
    <property type="match status" value="1"/>
</dbReference>
<dbReference type="InterPro" id="IPR003958">
    <property type="entry name" value="CBFA_NFYB_domain"/>
</dbReference>
<dbReference type="InterPro" id="IPR051377">
    <property type="entry name" value="DNA_Pol-Epsilon_Subunit"/>
</dbReference>
<dbReference type="InterPro" id="IPR009072">
    <property type="entry name" value="Histone-fold"/>
</dbReference>
<dbReference type="PANTHER" id="PTHR46172">
    <property type="entry name" value="DNA POLYMERASE EPSILON SUBUNIT 3"/>
    <property type="match status" value="1"/>
</dbReference>
<dbReference type="PANTHER" id="PTHR46172:SF1">
    <property type="entry name" value="DNA POLYMERASE EPSILON SUBUNIT 3"/>
    <property type="match status" value="1"/>
</dbReference>
<dbReference type="Pfam" id="PF00808">
    <property type="entry name" value="CBFD_NFYB_HMF"/>
    <property type="match status" value="1"/>
</dbReference>
<dbReference type="SUPFAM" id="SSF47113">
    <property type="entry name" value="Histone-fold"/>
    <property type="match status" value="1"/>
</dbReference>